<keyword id="KW-0238">DNA-binding</keyword>
<keyword id="KW-0479">Metal-binding</keyword>
<keyword id="KW-0539">Nucleus</keyword>
<keyword id="KW-1185">Reference proteome</keyword>
<keyword id="KW-0677">Repeat</keyword>
<keyword id="KW-0804">Transcription</keyword>
<keyword id="KW-0805">Transcription regulation</keyword>
<keyword id="KW-0862">Zinc</keyword>
<keyword id="KW-0863">Zinc-finger</keyword>
<organism>
    <name type="scientific">Homo sapiens</name>
    <name type="common">Human</name>
    <dbReference type="NCBI Taxonomy" id="9606"/>
    <lineage>
        <taxon>Eukaryota</taxon>
        <taxon>Metazoa</taxon>
        <taxon>Chordata</taxon>
        <taxon>Craniata</taxon>
        <taxon>Vertebrata</taxon>
        <taxon>Euteleostomi</taxon>
        <taxon>Mammalia</taxon>
        <taxon>Eutheria</taxon>
        <taxon>Euarchontoglires</taxon>
        <taxon>Primates</taxon>
        <taxon>Haplorrhini</taxon>
        <taxon>Catarrhini</taxon>
        <taxon>Hominidae</taxon>
        <taxon>Homo</taxon>
    </lineage>
</organism>
<gene>
    <name type="primary">ZNF582</name>
</gene>
<comment type="function">
    <text>May be involved in transcriptional regulation.</text>
</comment>
<comment type="interaction">
    <interactant intactId="EBI-21898620">
        <id>Q96NG8</id>
    </interactant>
    <interactant intactId="EBI-4314784">
        <id>Q96NY8</id>
        <label>NECTIN4</label>
    </interactant>
    <organismsDiffer>false</organismsDiffer>
    <experiments>2</experiments>
</comment>
<comment type="subcellular location">
    <subcellularLocation>
        <location evidence="4">Nucleus</location>
    </subcellularLocation>
</comment>
<comment type="similarity">
    <text evidence="4">Belongs to the krueppel C2H2-type zinc-finger protein family.</text>
</comment>
<comment type="sequence caution" evidence="4">
    <conflict type="miscellaneous discrepancy">
        <sequence resource="EMBL-CDS" id="AAH11796"/>
    </conflict>
    <text>Contaminating sequence. Potential poly-A sequence.</text>
</comment>
<comment type="sequence caution" evidence="4">
    <conflict type="erroneous initiation">
        <sequence resource="EMBL-CDS" id="BAG61111"/>
    </conflict>
    <text>Extended N-terminus.</text>
</comment>
<comment type="sequence caution" evidence="4">
    <conflict type="erroneous initiation">
        <sequence resource="EMBL-CDS" id="BAH14399"/>
    </conflict>
    <text>Extended N-terminus.</text>
</comment>
<comment type="sequence caution" evidence="4">
    <conflict type="erroneous gene model prediction">
        <sequence resource="EMBL-CDS" id="EAW72447"/>
    </conflict>
</comment>
<proteinExistence type="evidence at protein level"/>
<name>ZN582_HUMAN</name>
<feature type="chain" id="PRO_0000234591" description="Zinc finger protein 582">
    <location>
        <begin position="1"/>
        <end position="517"/>
    </location>
</feature>
<feature type="domain" description="KRAB" evidence="2">
    <location>
        <begin position="6"/>
        <end position="77"/>
    </location>
</feature>
<feature type="zinc finger region" description="C2H2-type 1; degenerate" evidence="1">
    <location>
        <begin position="171"/>
        <end position="193"/>
    </location>
</feature>
<feature type="zinc finger region" description="C2H2-type 2" evidence="1">
    <location>
        <begin position="199"/>
        <end position="221"/>
    </location>
</feature>
<feature type="zinc finger region" description="C2H2-type 3" evidence="1">
    <location>
        <begin position="227"/>
        <end position="249"/>
    </location>
</feature>
<feature type="zinc finger region" description="C2H2-type 4" evidence="1">
    <location>
        <begin position="255"/>
        <end position="277"/>
    </location>
</feature>
<feature type="zinc finger region" description="C2H2-type 5" evidence="1">
    <location>
        <begin position="283"/>
        <end position="305"/>
    </location>
</feature>
<feature type="zinc finger region" description="C2H2-type 6" evidence="1">
    <location>
        <begin position="311"/>
        <end position="333"/>
    </location>
</feature>
<feature type="zinc finger region" description="C2H2-type 7" evidence="1">
    <location>
        <begin position="339"/>
        <end position="361"/>
    </location>
</feature>
<feature type="zinc finger region" description="C2H2-type 8" evidence="1">
    <location>
        <begin position="367"/>
        <end position="389"/>
    </location>
</feature>
<feature type="zinc finger region" description="C2H2-type 9" evidence="1">
    <location>
        <begin position="395"/>
        <end position="417"/>
    </location>
</feature>
<feature type="zinc finger region" description="C2H2-type 10" evidence="1">
    <location>
        <begin position="423"/>
        <end position="445"/>
    </location>
</feature>
<feature type="sequence variant" id="VAR_070557" description="Found in a patient with mild intellectual disability and eye movement disorder; uncertain significance; dbSNP:rs369155373." evidence="3">
    <original>W</original>
    <variation>G</variation>
    <location>
        <position position="65"/>
    </location>
</feature>
<feature type="sequence variant" id="VAR_033578" description="In dbSNP:rs11883260.">
    <original>R</original>
    <variation>T</variation>
    <location>
        <position position="69"/>
    </location>
</feature>
<feature type="sequence variant" id="VAR_070558" description="Found in a patient with mild intellectual disability and eye movement disorder; uncertain significance; dbSNP:rs149022328." evidence="3">
    <original>G</original>
    <variation>E</variation>
    <location>
        <position position="345"/>
    </location>
</feature>
<feature type="sequence conflict" description="In Ref. 1; BAH14399." evidence="4" ref="1">
    <original>K</original>
    <variation>R</variation>
    <location>
        <position position="286"/>
    </location>
</feature>
<feature type="sequence conflict" description="In Ref. 1; BAH14399." evidence="4" ref="1">
    <original>K</original>
    <variation>R</variation>
    <location>
        <position position="365"/>
    </location>
</feature>
<feature type="sequence conflict" description="In Ref. 1; BAH14399." evidence="4" ref="1">
    <original>T</original>
    <variation>A</variation>
    <location>
        <position position="411"/>
    </location>
</feature>
<feature type="sequence conflict" description="In Ref. 1; BAH14399." evidence="4" ref="1">
    <original>K</original>
    <variation>G</variation>
    <location>
        <position position="426"/>
    </location>
</feature>
<feature type="sequence conflict" description="In Ref. 1; BAH14399." evidence="4" ref="1">
    <original>R</original>
    <variation>G</variation>
    <location>
        <position position="475"/>
    </location>
</feature>
<feature type="sequence conflict" description="In Ref. 1; BAH14399." evidence="4" ref="1">
    <original>P</original>
    <variation>A</variation>
    <location>
        <position position="487"/>
    </location>
</feature>
<evidence type="ECO:0000255" key="1">
    <source>
        <dbReference type="PROSITE-ProRule" id="PRU00042"/>
    </source>
</evidence>
<evidence type="ECO:0000255" key="2">
    <source>
        <dbReference type="PROSITE-ProRule" id="PRU00119"/>
    </source>
</evidence>
<evidence type="ECO:0000269" key="3">
    <source>
    </source>
</evidence>
<evidence type="ECO:0000305" key="4"/>
<sequence>MSLGSELFRDVAIVFSQEEWQWLAPAQRDLYRDVMLETYSNLVSLGLAVSKPDVISFLEQGKEPWMVERVVSGGLCPVLESRYDTKELFPKQHVYEVESPQWEIMESLTSYGLECSSFQDDWECRNQFDRQQGNPDRHFHQMIIRHEEMPTFDQHASLTFYQKIHTREKPFGYNKCRKDFWQKELLINHQGIYTNEKPYKCKECGKAFKYGSRLIQHENIHSGKKPYECKECGKAFNSGSNFIQHQRVHTGEKPYECKDCEKAFSRSSQLIEHQRTHTGEKPYQCKECGKAFNRISHLKVHYRIHTGEKPYACKECGKTFSHRSQLIQHQTVHTGRKLYECKECGKAFNQGSTLIRHQRIHTGEKPYECKVCGKAFRVSSQLKQHQRIHTGEKPYQCKVCGRAFKRVSHLTVHYRIHTGEKPYECKECGKAFSHCSQLIHHQVIHTEKKPYEYKECEKTLSHDSTTVQPQRMHNRETHVNIINVEKPSISSYPLLIIREFMLASNHMNGSNGESPLA</sequence>
<protein>
    <recommendedName>
        <fullName>Zinc finger protein 582</fullName>
    </recommendedName>
</protein>
<dbReference type="EMBL" id="AK055489">
    <property type="protein sequence ID" value="BAB70931.1"/>
    <property type="molecule type" value="mRNA"/>
</dbReference>
<dbReference type="EMBL" id="AK299036">
    <property type="protein sequence ID" value="BAG61111.1"/>
    <property type="status" value="ALT_INIT"/>
    <property type="molecule type" value="mRNA"/>
</dbReference>
<dbReference type="EMBL" id="AK316028">
    <property type="protein sequence ID" value="BAH14399.1"/>
    <property type="status" value="ALT_INIT"/>
    <property type="molecule type" value="mRNA"/>
</dbReference>
<dbReference type="EMBL" id="CH471135">
    <property type="protein sequence ID" value="EAW72447.1"/>
    <property type="status" value="ALT_SEQ"/>
    <property type="molecule type" value="Genomic_DNA"/>
</dbReference>
<dbReference type="EMBL" id="BC011796">
    <property type="protein sequence ID" value="AAH11796.1"/>
    <property type="status" value="ALT_SEQ"/>
    <property type="molecule type" value="mRNA"/>
</dbReference>
<dbReference type="EMBL" id="BC101008">
    <property type="protein sequence ID" value="AAI01009.1"/>
    <property type="molecule type" value="mRNA"/>
</dbReference>
<dbReference type="EMBL" id="BC101009">
    <property type="protein sequence ID" value="AAI01010.1"/>
    <property type="molecule type" value="mRNA"/>
</dbReference>
<dbReference type="EMBL" id="BC101010">
    <property type="protein sequence ID" value="AAI01011.1"/>
    <property type="molecule type" value="mRNA"/>
</dbReference>
<dbReference type="EMBL" id="BC101011">
    <property type="protein sequence ID" value="AAI01012.1"/>
    <property type="molecule type" value="mRNA"/>
</dbReference>
<dbReference type="CCDS" id="CCDS33121.1"/>
<dbReference type="RefSeq" id="NP_001307300.2">
    <property type="nucleotide sequence ID" value="NM_001320371.4"/>
</dbReference>
<dbReference type="RefSeq" id="NP_653291.1">
    <property type="nucleotide sequence ID" value="NM_144690.3"/>
</dbReference>
<dbReference type="SMR" id="Q96NG8"/>
<dbReference type="BioGRID" id="127104">
    <property type="interactions" value="13"/>
</dbReference>
<dbReference type="FunCoup" id="Q96NG8">
    <property type="interactions" value="4"/>
</dbReference>
<dbReference type="IntAct" id="Q96NG8">
    <property type="interactions" value="1"/>
</dbReference>
<dbReference type="STRING" id="9606.ENSP00000301310"/>
<dbReference type="GlyGen" id="Q96NG8">
    <property type="glycosylation" value="1 site, 1 O-linked glycan (1 site)"/>
</dbReference>
<dbReference type="iPTMnet" id="Q96NG8"/>
<dbReference type="PhosphoSitePlus" id="Q96NG8"/>
<dbReference type="BioMuta" id="ZNF582"/>
<dbReference type="DMDM" id="74732564"/>
<dbReference type="jPOST" id="Q96NG8"/>
<dbReference type="MassIVE" id="Q96NG8"/>
<dbReference type="PaxDb" id="9606-ENSP00000301310"/>
<dbReference type="PeptideAtlas" id="Q96NG8"/>
<dbReference type="ProteomicsDB" id="77511"/>
<dbReference type="Antibodypedia" id="33207">
    <property type="antibodies" value="59 antibodies from 15 providers"/>
</dbReference>
<dbReference type="DNASU" id="147948"/>
<dbReference type="Ensembl" id="ENST00000301310.8">
    <property type="protein sequence ID" value="ENSP00000301310.3"/>
    <property type="gene ID" value="ENSG00000018869.18"/>
</dbReference>
<dbReference type="Ensembl" id="ENST00000586929.6">
    <property type="protein sequence ID" value="ENSP00000465619.1"/>
    <property type="gene ID" value="ENSG00000018869.18"/>
</dbReference>
<dbReference type="GeneID" id="147948"/>
<dbReference type="KEGG" id="hsa:147948"/>
<dbReference type="MANE-Select" id="ENST00000586929.6">
    <property type="protein sequence ID" value="ENSP00000465619.1"/>
    <property type="RefSeq nucleotide sequence ID" value="NM_001320371.4"/>
    <property type="RefSeq protein sequence ID" value="NP_001307300.2"/>
</dbReference>
<dbReference type="UCSC" id="uc002qmz.1">
    <property type="organism name" value="human"/>
</dbReference>
<dbReference type="AGR" id="HGNC:26421"/>
<dbReference type="CTD" id="147948"/>
<dbReference type="DisGeNET" id="147948"/>
<dbReference type="GeneCards" id="ZNF582"/>
<dbReference type="HGNC" id="HGNC:26421">
    <property type="gene designation" value="ZNF582"/>
</dbReference>
<dbReference type="HPA" id="ENSG00000018869">
    <property type="expression patterns" value="Low tissue specificity"/>
</dbReference>
<dbReference type="MIM" id="615600">
    <property type="type" value="gene"/>
</dbReference>
<dbReference type="neXtProt" id="NX_Q96NG8"/>
<dbReference type="OpenTargets" id="ENSG00000018869"/>
<dbReference type="PharmGKB" id="PA134989661"/>
<dbReference type="VEuPathDB" id="HostDB:ENSG00000018869"/>
<dbReference type="eggNOG" id="KOG1721">
    <property type="taxonomic scope" value="Eukaryota"/>
</dbReference>
<dbReference type="GeneTree" id="ENSGT00940000162794"/>
<dbReference type="HOGENOM" id="CLU_002678_0_9_1"/>
<dbReference type="InParanoid" id="Q96NG8"/>
<dbReference type="OMA" id="EFLINHQ"/>
<dbReference type="OrthoDB" id="6077919at2759"/>
<dbReference type="PAN-GO" id="Q96NG8">
    <property type="GO annotations" value="3 GO annotations based on evolutionary models"/>
</dbReference>
<dbReference type="PhylomeDB" id="Q96NG8"/>
<dbReference type="TreeFam" id="TF337055"/>
<dbReference type="PathwayCommons" id="Q96NG8"/>
<dbReference type="Reactome" id="R-HSA-212436">
    <property type="pathway name" value="Generic Transcription Pathway"/>
</dbReference>
<dbReference type="SignaLink" id="Q96NG8"/>
<dbReference type="BioGRID-ORCS" id="147948">
    <property type="hits" value="18 hits in 1180 CRISPR screens"/>
</dbReference>
<dbReference type="GenomeRNAi" id="147948"/>
<dbReference type="Pharos" id="Q96NG8">
    <property type="development level" value="Tbio"/>
</dbReference>
<dbReference type="PRO" id="PR:Q96NG8"/>
<dbReference type="Proteomes" id="UP000005640">
    <property type="component" value="Chromosome 19"/>
</dbReference>
<dbReference type="RNAct" id="Q96NG8">
    <property type="molecule type" value="protein"/>
</dbReference>
<dbReference type="Bgee" id="ENSG00000018869">
    <property type="expression patterns" value="Expressed in tibialis anterior and 122 other cell types or tissues"/>
</dbReference>
<dbReference type="ExpressionAtlas" id="Q96NG8">
    <property type="expression patterns" value="baseline and differential"/>
</dbReference>
<dbReference type="GO" id="GO:0005634">
    <property type="term" value="C:nucleus"/>
    <property type="evidence" value="ECO:0000318"/>
    <property type="project" value="GO_Central"/>
</dbReference>
<dbReference type="GO" id="GO:0000981">
    <property type="term" value="F:DNA-binding transcription factor activity, RNA polymerase II-specific"/>
    <property type="evidence" value="ECO:0000318"/>
    <property type="project" value="GO_Central"/>
</dbReference>
<dbReference type="GO" id="GO:0000977">
    <property type="term" value="F:RNA polymerase II transcription regulatory region sequence-specific DNA binding"/>
    <property type="evidence" value="ECO:0000318"/>
    <property type="project" value="GO_Central"/>
</dbReference>
<dbReference type="GO" id="GO:0008270">
    <property type="term" value="F:zinc ion binding"/>
    <property type="evidence" value="ECO:0007669"/>
    <property type="project" value="UniProtKB-KW"/>
</dbReference>
<dbReference type="GO" id="GO:0006357">
    <property type="term" value="P:regulation of transcription by RNA polymerase II"/>
    <property type="evidence" value="ECO:0000318"/>
    <property type="project" value="GO_Central"/>
</dbReference>
<dbReference type="CDD" id="cd07765">
    <property type="entry name" value="KRAB_A-box"/>
    <property type="match status" value="1"/>
</dbReference>
<dbReference type="FunFam" id="3.30.160.60:FF:000824">
    <property type="entry name" value="Zinc finger protein 184"/>
    <property type="match status" value="1"/>
</dbReference>
<dbReference type="FunFam" id="3.30.160.60:FF:000794">
    <property type="entry name" value="zinc finger protein 2 isoform X2"/>
    <property type="match status" value="1"/>
</dbReference>
<dbReference type="FunFam" id="3.30.160.60:FF:000016">
    <property type="entry name" value="zinc finger protein 37 homolog"/>
    <property type="match status" value="1"/>
</dbReference>
<dbReference type="FunFam" id="3.30.160.60:FF:001498">
    <property type="entry name" value="Zinc finger protein 404"/>
    <property type="match status" value="1"/>
</dbReference>
<dbReference type="FunFam" id="3.30.160.60:FF:002623">
    <property type="entry name" value="Zinc finger protein 422, related sequence 1"/>
    <property type="match status" value="1"/>
</dbReference>
<dbReference type="FunFam" id="3.30.160.60:FF:002254">
    <property type="entry name" value="Zinc finger protein 540"/>
    <property type="match status" value="2"/>
</dbReference>
<dbReference type="FunFam" id="3.30.160.60:FF:000737">
    <property type="entry name" value="Zinc finger protein 565"/>
    <property type="match status" value="1"/>
</dbReference>
<dbReference type="FunFam" id="3.30.160.60:FF:001296">
    <property type="entry name" value="Zinc finger protein 582"/>
    <property type="match status" value="2"/>
</dbReference>
<dbReference type="FunFam" id="3.30.160.60:FF:002598">
    <property type="entry name" value="zinc finger protein 582 isoform X2"/>
    <property type="match status" value="1"/>
</dbReference>
<dbReference type="Gene3D" id="6.10.140.140">
    <property type="match status" value="1"/>
</dbReference>
<dbReference type="Gene3D" id="3.30.160.60">
    <property type="entry name" value="Classic Zinc Finger"/>
    <property type="match status" value="10"/>
</dbReference>
<dbReference type="InterPro" id="IPR001909">
    <property type="entry name" value="KRAB"/>
</dbReference>
<dbReference type="InterPro" id="IPR036051">
    <property type="entry name" value="KRAB_dom_sf"/>
</dbReference>
<dbReference type="InterPro" id="IPR036236">
    <property type="entry name" value="Znf_C2H2_sf"/>
</dbReference>
<dbReference type="InterPro" id="IPR013087">
    <property type="entry name" value="Znf_C2H2_type"/>
</dbReference>
<dbReference type="PANTHER" id="PTHR24390">
    <property type="entry name" value="ZINC FINGER PROTEIN"/>
    <property type="match status" value="1"/>
</dbReference>
<dbReference type="PANTHER" id="PTHR24390:SF260">
    <property type="entry name" value="ZINC FINGER PROTEIN 383-RELATED"/>
    <property type="match status" value="1"/>
</dbReference>
<dbReference type="Pfam" id="PF01352">
    <property type="entry name" value="KRAB"/>
    <property type="match status" value="1"/>
</dbReference>
<dbReference type="Pfam" id="PF00096">
    <property type="entry name" value="zf-C2H2"/>
    <property type="match status" value="9"/>
</dbReference>
<dbReference type="SMART" id="SM00349">
    <property type="entry name" value="KRAB"/>
    <property type="match status" value="1"/>
</dbReference>
<dbReference type="SMART" id="SM00355">
    <property type="entry name" value="ZnF_C2H2"/>
    <property type="match status" value="9"/>
</dbReference>
<dbReference type="SUPFAM" id="SSF57667">
    <property type="entry name" value="beta-beta-alpha zinc fingers"/>
    <property type="match status" value="6"/>
</dbReference>
<dbReference type="SUPFAM" id="SSF109640">
    <property type="entry name" value="KRAB domain (Kruppel-associated box)"/>
    <property type="match status" value="1"/>
</dbReference>
<dbReference type="PROSITE" id="PS50805">
    <property type="entry name" value="KRAB"/>
    <property type="match status" value="1"/>
</dbReference>
<dbReference type="PROSITE" id="PS00028">
    <property type="entry name" value="ZINC_FINGER_C2H2_1"/>
    <property type="match status" value="9"/>
</dbReference>
<dbReference type="PROSITE" id="PS50157">
    <property type="entry name" value="ZINC_FINGER_C2H2_2"/>
    <property type="match status" value="10"/>
</dbReference>
<reference key="1">
    <citation type="journal article" date="2004" name="Nat. Genet.">
        <title>Complete sequencing and characterization of 21,243 full-length human cDNAs.</title>
        <authorList>
            <person name="Ota T."/>
            <person name="Suzuki Y."/>
            <person name="Nishikawa T."/>
            <person name="Otsuki T."/>
            <person name="Sugiyama T."/>
            <person name="Irie R."/>
            <person name="Wakamatsu A."/>
            <person name="Hayashi K."/>
            <person name="Sato H."/>
            <person name="Nagai K."/>
            <person name="Kimura K."/>
            <person name="Makita H."/>
            <person name="Sekine M."/>
            <person name="Obayashi M."/>
            <person name="Nishi T."/>
            <person name="Shibahara T."/>
            <person name="Tanaka T."/>
            <person name="Ishii S."/>
            <person name="Yamamoto J."/>
            <person name="Saito K."/>
            <person name="Kawai Y."/>
            <person name="Isono Y."/>
            <person name="Nakamura Y."/>
            <person name="Nagahari K."/>
            <person name="Murakami K."/>
            <person name="Yasuda T."/>
            <person name="Iwayanagi T."/>
            <person name="Wagatsuma M."/>
            <person name="Shiratori A."/>
            <person name="Sudo H."/>
            <person name="Hosoiri T."/>
            <person name="Kaku Y."/>
            <person name="Kodaira H."/>
            <person name="Kondo H."/>
            <person name="Sugawara M."/>
            <person name="Takahashi M."/>
            <person name="Kanda K."/>
            <person name="Yokoi T."/>
            <person name="Furuya T."/>
            <person name="Kikkawa E."/>
            <person name="Omura Y."/>
            <person name="Abe K."/>
            <person name="Kamihara K."/>
            <person name="Katsuta N."/>
            <person name="Sato K."/>
            <person name="Tanikawa M."/>
            <person name="Yamazaki M."/>
            <person name="Ninomiya K."/>
            <person name="Ishibashi T."/>
            <person name="Yamashita H."/>
            <person name="Murakawa K."/>
            <person name="Fujimori K."/>
            <person name="Tanai H."/>
            <person name="Kimata M."/>
            <person name="Watanabe M."/>
            <person name="Hiraoka S."/>
            <person name="Chiba Y."/>
            <person name="Ishida S."/>
            <person name="Ono Y."/>
            <person name="Takiguchi S."/>
            <person name="Watanabe S."/>
            <person name="Yosida M."/>
            <person name="Hotuta T."/>
            <person name="Kusano J."/>
            <person name="Kanehori K."/>
            <person name="Takahashi-Fujii A."/>
            <person name="Hara H."/>
            <person name="Tanase T.-O."/>
            <person name="Nomura Y."/>
            <person name="Togiya S."/>
            <person name="Komai F."/>
            <person name="Hara R."/>
            <person name="Takeuchi K."/>
            <person name="Arita M."/>
            <person name="Imose N."/>
            <person name="Musashino K."/>
            <person name="Yuuki H."/>
            <person name="Oshima A."/>
            <person name="Sasaki N."/>
            <person name="Aotsuka S."/>
            <person name="Yoshikawa Y."/>
            <person name="Matsunawa H."/>
            <person name="Ichihara T."/>
            <person name="Shiohata N."/>
            <person name="Sano S."/>
            <person name="Moriya S."/>
            <person name="Momiyama H."/>
            <person name="Satoh N."/>
            <person name="Takami S."/>
            <person name="Terashima Y."/>
            <person name="Suzuki O."/>
            <person name="Nakagawa S."/>
            <person name="Senoh A."/>
            <person name="Mizoguchi H."/>
            <person name="Goto Y."/>
            <person name="Shimizu F."/>
            <person name="Wakebe H."/>
            <person name="Hishigaki H."/>
            <person name="Watanabe T."/>
            <person name="Sugiyama A."/>
            <person name="Takemoto M."/>
            <person name="Kawakami B."/>
            <person name="Yamazaki M."/>
            <person name="Watanabe K."/>
            <person name="Kumagai A."/>
            <person name="Itakura S."/>
            <person name="Fukuzumi Y."/>
            <person name="Fujimori Y."/>
            <person name="Komiyama M."/>
            <person name="Tashiro H."/>
            <person name="Tanigami A."/>
            <person name="Fujiwara T."/>
            <person name="Ono T."/>
            <person name="Yamada K."/>
            <person name="Fujii Y."/>
            <person name="Ozaki K."/>
            <person name="Hirao M."/>
            <person name="Ohmori Y."/>
            <person name="Kawabata A."/>
            <person name="Hikiji T."/>
            <person name="Kobatake N."/>
            <person name="Inagaki H."/>
            <person name="Ikema Y."/>
            <person name="Okamoto S."/>
            <person name="Okitani R."/>
            <person name="Kawakami T."/>
            <person name="Noguchi S."/>
            <person name="Itoh T."/>
            <person name="Shigeta K."/>
            <person name="Senba T."/>
            <person name="Matsumura K."/>
            <person name="Nakajima Y."/>
            <person name="Mizuno T."/>
            <person name="Morinaga M."/>
            <person name="Sasaki M."/>
            <person name="Togashi T."/>
            <person name="Oyama M."/>
            <person name="Hata H."/>
            <person name="Watanabe M."/>
            <person name="Komatsu T."/>
            <person name="Mizushima-Sugano J."/>
            <person name="Satoh T."/>
            <person name="Shirai Y."/>
            <person name="Takahashi Y."/>
            <person name="Nakagawa K."/>
            <person name="Okumura K."/>
            <person name="Nagase T."/>
            <person name="Nomura N."/>
            <person name="Kikuchi H."/>
            <person name="Masuho Y."/>
            <person name="Yamashita R."/>
            <person name="Nakai K."/>
            <person name="Yada T."/>
            <person name="Nakamura Y."/>
            <person name="Ohara O."/>
            <person name="Isogai T."/>
            <person name="Sugano S."/>
        </authorList>
    </citation>
    <scope>NUCLEOTIDE SEQUENCE [LARGE SCALE MRNA]</scope>
    <source>
        <tissue>Brain</tissue>
        <tissue>Teratocarcinoma</tissue>
    </source>
</reference>
<reference key="2">
    <citation type="submission" date="2005-07" db="EMBL/GenBank/DDBJ databases">
        <authorList>
            <person name="Mural R.J."/>
            <person name="Istrail S."/>
            <person name="Sutton G.G."/>
            <person name="Florea L."/>
            <person name="Halpern A.L."/>
            <person name="Mobarry C.M."/>
            <person name="Lippert R."/>
            <person name="Walenz B."/>
            <person name="Shatkay H."/>
            <person name="Dew I."/>
            <person name="Miller J.R."/>
            <person name="Flanigan M.J."/>
            <person name="Edwards N.J."/>
            <person name="Bolanos R."/>
            <person name="Fasulo D."/>
            <person name="Halldorsson B.V."/>
            <person name="Hannenhalli S."/>
            <person name="Turner R."/>
            <person name="Yooseph S."/>
            <person name="Lu F."/>
            <person name="Nusskern D.R."/>
            <person name="Shue B.C."/>
            <person name="Zheng X.H."/>
            <person name="Zhong F."/>
            <person name="Delcher A.L."/>
            <person name="Huson D.H."/>
            <person name="Kravitz S.A."/>
            <person name="Mouchard L."/>
            <person name="Reinert K."/>
            <person name="Remington K.A."/>
            <person name="Clark A.G."/>
            <person name="Waterman M.S."/>
            <person name="Eichler E.E."/>
            <person name="Adams M.D."/>
            <person name="Hunkapiller M.W."/>
            <person name="Myers E.W."/>
            <person name="Venter J.C."/>
        </authorList>
    </citation>
    <scope>NUCLEOTIDE SEQUENCE [LARGE SCALE GENOMIC DNA]</scope>
</reference>
<reference key="3">
    <citation type="journal article" date="2004" name="Genome Res.">
        <title>The status, quality, and expansion of the NIH full-length cDNA project: the Mammalian Gene Collection (MGC).</title>
        <authorList>
            <consortium name="The MGC Project Team"/>
        </authorList>
    </citation>
    <scope>NUCLEOTIDE SEQUENCE [LARGE SCALE MRNA]</scope>
    <source>
        <tissue>Muscle</tissue>
    </source>
</reference>
<reference key="4">
    <citation type="journal article" date="2013" name="J. Med. Genet.">
        <title>Identification of pathogenic gene variants in small families with intellectually disabled siblings by exome sequencing.</title>
        <authorList>
            <person name="Schuurs-Hoeijmakers J.H."/>
            <person name="Vulto-van Silfhout A.T."/>
            <person name="Vissers L.E."/>
            <person name="van de Vondervoort I.I."/>
            <person name="van Bon B.W."/>
            <person name="de Ligt J."/>
            <person name="Gilissen C."/>
            <person name="Hehir-Kwa J.Y."/>
            <person name="Neveling K."/>
            <person name="del Rosario M."/>
            <person name="Hira G."/>
            <person name="Reitano S."/>
            <person name="Vitello A."/>
            <person name="Failla P."/>
            <person name="Greco D."/>
            <person name="Fichera M."/>
            <person name="Galesi O."/>
            <person name="Kleefstra T."/>
            <person name="Greally M.T."/>
            <person name="Ockeloen C.W."/>
            <person name="Willemsen M.H."/>
            <person name="Bongers E.M."/>
            <person name="Janssen I.M."/>
            <person name="Pfundt R."/>
            <person name="Veltman J.A."/>
            <person name="Romano C."/>
            <person name="Willemsen M.A."/>
            <person name="van Bokhoven H."/>
            <person name="Brunner H.G."/>
            <person name="de Vries B.B."/>
            <person name="de Brouwer A.P."/>
        </authorList>
    </citation>
    <scope>VARIANTS GLY-65 AND GLU-345</scope>
</reference>
<accession>Q96NG8</accession>
<accession>B4DQZ9</accession>
<accession>B7Z9R3</accession>
<accession>Q6PJT6</accession>